<dbReference type="EC" id="1.11.-.-" evidence="7"/>
<dbReference type="EMBL" id="HG792019">
    <property type="protein sequence ID" value="CDM36675.1"/>
    <property type="molecule type" value="Genomic_DNA"/>
</dbReference>
<dbReference type="SMR" id="W6QJS4"/>
<dbReference type="STRING" id="1365484.W6QJS4"/>
<dbReference type="OMA" id="GSFKYVH"/>
<dbReference type="OrthoDB" id="6880011at2759"/>
<dbReference type="UniPathway" id="UPA00327"/>
<dbReference type="Proteomes" id="UP000030686">
    <property type="component" value="Unassembled WGS sequence"/>
</dbReference>
<dbReference type="GO" id="GO:0005739">
    <property type="term" value="C:mitochondrion"/>
    <property type="evidence" value="ECO:0007669"/>
    <property type="project" value="TreeGrafter"/>
</dbReference>
<dbReference type="GO" id="GO:0005777">
    <property type="term" value="C:peroxisome"/>
    <property type="evidence" value="ECO:0007669"/>
    <property type="project" value="TreeGrafter"/>
</dbReference>
<dbReference type="GO" id="GO:0004096">
    <property type="term" value="F:catalase activity"/>
    <property type="evidence" value="ECO:0007669"/>
    <property type="project" value="InterPro"/>
</dbReference>
<dbReference type="GO" id="GO:0020037">
    <property type="term" value="F:heme binding"/>
    <property type="evidence" value="ECO:0007669"/>
    <property type="project" value="InterPro"/>
</dbReference>
<dbReference type="GO" id="GO:0046872">
    <property type="term" value="F:metal ion binding"/>
    <property type="evidence" value="ECO:0007669"/>
    <property type="project" value="UniProtKB-KW"/>
</dbReference>
<dbReference type="GO" id="GO:0042744">
    <property type="term" value="P:hydrogen peroxide catabolic process"/>
    <property type="evidence" value="ECO:0007669"/>
    <property type="project" value="UniProtKB-KW"/>
</dbReference>
<dbReference type="GO" id="GO:0035835">
    <property type="term" value="P:indole alkaloid biosynthetic process"/>
    <property type="evidence" value="ECO:0007669"/>
    <property type="project" value="UniProtKB-UniPathway"/>
</dbReference>
<dbReference type="GO" id="GO:0042542">
    <property type="term" value="P:response to hydrogen peroxide"/>
    <property type="evidence" value="ECO:0007669"/>
    <property type="project" value="TreeGrafter"/>
</dbReference>
<dbReference type="Gene3D" id="2.40.180.10">
    <property type="entry name" value="Catalase core domain"/>
    <property type="match status" value="1"/>
</dbReference>
<dbReference type="InterPro" id="IPR018028">
    <property type="entry name" value="Catalase"/>
</dbReference>
<dbReference type="InterPro" id="IPR024708">
    <property type="entry name" value="Catalase_AS"/>
</dbReference>
<dbReference type="InterPro" id="IPR024711">
    <property type="entry name" value="Catalase_clade1/3"/>
</dbReference>
<dbReference type="InterPro" id="IPR011614">
    <property type="entry name" value="Catalase_core"/>
</dbReference>
<dbReference type="InterPro" id="IPR002226">
    <property type="entry name" value="Catalase_haem_BS"/>
</dbReference>
<dbReference type="InterPro" id="IPR020835">
    <property type="entry name" value="Catalase_sf"/>
</dbReference>
<dbReference type="PANTHER" id="PTHR11465">
    <property type="entry name" value="CATALASE"/>
    <property type="match status" value="1"/>
</dbReference>
<dbReference type="PANTHER" id="PTHR11465:SF9">
    <property type="entry name" value="CATALASE"/>
    <property type="match status" value="1"/>
</dbReference>
<dbReference type="Pfam" id="PF00199">
    <property type="entry name" value="Catalase"/>
    <property type="match status" value="1"/>
</dbReference>
<dbReference type="PIRSF" id="PIRSF038928">
    <property type="entry name" value="Catalase_clade1-3"/>
    <property type="match status" value="1"/>
</dbReference>
<dbReference type="PRINTS" id="PR00067">
    <property type="entry name" value="CATALASE"/>
</dbReference>
<dbReference type="SMART" id="SM01060">
    <property type="entry name" value="Catalase"/>
    <property type="match status" value="1"/>
</dbReference>
<dbReference type="SUPFAM" id="SSF56634">
    <property type="entry name" value="Heme-dependent catalase-like"/>
    <property type="match status" value="1"/>
</dbReference>
<dbReference type="PROSITE" id="PS00437">
    <property type="entry name" value="CATALASE_1"/>
    <property type="match status" value="1"/>
</dbReference>
<dbReference type="PROSITE" id="PS00438">
    <property type="entry name" value="CATALASE_2"/>
    <property type="match status" value="1"/>
</dbReference>
<dbReference type="PROSITE" id="PS51402">
    <property type="entry name" value="CATALASE_3"/>
    <property type="match status" value="1"/>
</dbReference>
<comment type="function">
    <text evidence="3 4">Catalase; part of the gene cluster that mediates the biosynthesis of isofumigaclavines, fungal ergot alkaloids (PubMed:28620689). The tryptophan dimethylallyltransferase ifgA catalyzes the first step of ergot alkaloid biosynthesis by condensing dimethylallyl diphosphate (DMAP) and tryptophan to form 4-dimethylallyl-L-tryptophan (PubMed:28620689). The second step is catalyzed by the methyltransferase ifgB that methylates 4-dimethylallyl-L-tryptophan in the presence of S-adenosyl-L-methionine, resulting in the formation of N-methyl-dimethylallyl-L-tryptophan (PubMed:28620689). The catalase ifgD and the FAD-dependent oxidoreductase ifgC then transform N-methyl-dimethylallyl-L-tryptophan to chanoclavine-I which is further oxidized by ifgE in the presence of NAD(+), resulting in the formation of chanoclavine-I aldehyde (PubMed:28902217). The chanoclavine-I aldehyde reductases ifgG and/or fgaOx3 reduce chanoclavine-I aldehyde to dihydrochanoclavine-I aldehyde that spontaneously dehydrates to form 6,8-dimethyl-6,7-didehydroergoline (PubMed:28620689, PubMed:28902217). The festuclavine dehydrogenases ifgF1 and/or ifgF2 then catalyze the reduction of 6,8-dimethyl-6,7-didehydroergoline to form festuclavine (PubMed:28620689). Hydrolysis of festuclavine by a yet undetermined cytochrome P450 monooxygenase (called ifgH) then leads to the formation of isofumigaclavine B which is in turn acetylated by ifgI to isofumigaclavine A (PubMed:28620689). Penicillium roqueforti has interestingly at least two sets of genes for the consumption of chanoclavine-I aldehyde on three different loci, the OYEs ifgG/fgaOx3 and the festuclavine synthase homologs ifgF1/ifgF2 (PubMed:28620689, PubMed:28902217). The reason for the duplication of these genes is unclear, probably to ensure the conversion of chanoclavine-I aldehyde by differential gene expression under various environmental conditions (PubMed:28902217).</text>
</comment>
<comment type="cofactor">
    <cofactor evidence="1">
        <name>heme</name>
        <dbReference type="ChEBI" id="CHEBI:30413"/>
    </cofactor>
</comment>
<comment type="pathway">
    <text evidence="7">Alkaloid biosynthesis; ergot alkaloid biosynthesis.</text>
</comment>
<comment type="similarity">
    <text evidence="6">Belongs to the catalase family.</text>
</comment>
<protein>
    <recommendedName>
        <fullName evidence="5">Catalase ifgD</fullName>
        <ecNumber evidence="7">1.11.-.-</ecNumber>
    </recommendedName>
    <alternativeName>
        <fullName evidence="5">Isofumigaclavine biosynthesis cluster A protein D</fullName>
    </alternativeName>
</protein>
<name>IFGD_PENRF</name>
<feature type="chain" id="PRO_0000444539" description="Catalase ifgD">
    <location>
        <begin position="1"/>
        <end position="466"/>
    </location>
</feature>
<feature type="region of interest" description="Disordered" evidence="2">
    <location>
        <begin position="1"/>
        <end position="22"/>
    </location>
</feature>
<feature type="active site" evidence="1">
    <location>
        <position position="48"/>
    </location>
</feature>
<feature type="binding site" description="axial binding residue" evidence="1">
    <location>
        <position position="337"/>
    </location>
    <ligand>
        <name>heme</name>
        <dbReference type="ChEBI" id="CHEBI:30413"/>
    </ligand>
    <ligandPart>
        <name>Fe</name>
        <dbReference type="ChEBI" id="CHEBI:18248"/>
    </ligandPart>
</feature>
<reference key="1">
    <citation type="journal article" date="2014" name="Nat. Commun.">
        <title>Multiple recent horizontal transfers of a large genomic region in cheese making fungi.</title>
        <authorList>
            <person name="Cheeseman K."/>
            <person name="Ropars J."/>
            <person name="Renault P."/>
            <person name="Dupont J."/>
            <person name="Gouzy J."/>
            <person name="Branca A."/>
            <person name="Abraham A.-L."/>
            <person name="Ceppi M."/>
            <person name="Conseiller E."/>
            <person name="Debuchy R."/>
            <person name="Malagnac F."/>
            <person name="Goarin A."/>
            <person name="Silar P."/>
            <person name="Lacoste S."/>
            <person name="Sallet E."/>
            <person name="Bensimon A."/>
            <person name="Giraud T."/>
            <person name="Brygoo Y."/>
        </authorList>
    </citation>
    <scope>NUCLEOTIDE SEQUENCE [LARGE SCALE GENOMIC DNA]</scope>
    <source>
        <strain>FM164</strain>
    </source>
</reference>
<reference key="2">
    <citation type="journal article" date="2017" name="Appl. Microbiol. Biotechnol.">
        <title>Silencing of a second dimethylallyltryptophan synthase of Penicillium roqueforti reveals a novel clavine alkaloid gene cluster.</title>
        <authorList>
            <person name="Fernandez-Bodega A."/>
            <person name="Alvarez-Alvarez R."/>
            <person name="Liras P."/>
            <person name="Martin J.F."/>
        </authorList>
    </citation>
    <scope>FUNCTION</scope>
    <scope>PATHWAY</scope>
</reference>
<reference key="3">
    <citation type="journal article" date="2017" name="Org. Biomol. Chem.">
        <title>A bifunctional old yellow enzyme from Penicillium roqueforti is involved in ergot alkaloid biosynthesis.</title>
        <authorList>
            <person name="Gerhards N."/>
            <person name="Li S.M."/>
        </authorList>
    </citation>
    <scope>FUNCTION</scope>
</reference>
<sequence>MAPNYAKKCPVMGKAPSSGHSSIGPQDVHTLEVLSNFNREKIPERVVHALGAGAYGEFEVTHDISDICNIDMLLGVGKKTSLVTRFSTTGLERGSSEGVQDLKGMATKLFTSDGEWDWVFLNFPFFFIRDPVKFPDMIHSQRRDPQTNRLNPNNFWEFVTENHESIHMVLLQYSDFGRMFTWRTLSSYSGHAFKWVMPDGSFKYVHFFLSSDRGPNFKDGAGTIMDSSEPDFASRDLFEAIERGDHPSWTANVQVIDPKDAPHLGFNILDVTKHWNLGTYPQGVEKIPSRPFGKLTLNRNVKDYFSEVEQLAFSPSHLVPGIEASEDPILQARLFAYPDAQRYRLGRTLSKQASPRTSSTAEYQASLGKDFAEWVAQVSSDVWSQPHEDDYKFAREYYEILPEFRSQEFQDRMVERIVESVSQTRQDIRNKVYRTFALVSSELATRVQEGVEGAEIGQEKNVQARL</sequence>
<accession>W6QJS4</accession>
<proteinExistence type="inferred from homology"/>
<gene>
    <name evidence="5" type="primary">ifgD</name>
    <name type="ORF">PROQFM164_S05g000508</name>
</gene>
<organism>
    <name type="scientific">Penicillium roqueforti (strain FM164)</name>
    <dbReference type="NCBI Taxonomy" id="1365484"/>
    <lineage>
        <taxon>Eukaryota</taxon>
        <taxon>Fungi</taxon>
        <taxon>Dikarya</taxon>
        <taxon>Ascomycota</taxon>
        <taxon>Pezizomycotina</taxon>
        <taxon>Eurotiomycetes</taxon>
        <taxon>Eurotiomycetidae</taxon>
        <taxon>Eurotiales</taxon>
        <taxon>Aspergillaceae</taxon>
        <taxon>Penicillium</taxon>
    </lineage>
</organism>
<keyword id="KW-0017">Alkaloid metabolism</keyword>
<keyword id="KW-0349">Heme</keyword>
<keyword id="KW-0376">Hydrogen peroxide</keyword>
<keyword id="KW-0408">Iron</keyword>
<keyword id="KW-0479">Metal-binding</keyword>
<keyword id="KW-0560">Oxidoreductase</keyword>
<keyword id="KW-0575">Peroxidase</keyword>
<keyword id="KW-1185">Reference proteome</keyword>
<evidence type="ECO:0000250" key="1">
    <source>
        <dbReference type="UniProtKB" id="P15202"/>
    </source>
</evidence>
<evidence type="ECO:0000256" key="2">
    <source>
        <dbReference type="SAM" id="MobiDB-lite"/>
    </source>
</evidence>
<evidence type="ECO:0000269" key="3">
    <source>
    </source>
</evidence>
<evidence type="ECO:0000269" key="4">
    <source>
    </source>
</evidence>
<evidence type="ECO:0000303" key="5">
    <source>
    </source>
</evidence>
<evidence type="ECO:0000305" key="6"/>
<evidence type="ECO:0000305" key="7">
    <source>
    </source>
</evidence>